<reference key="1">
    <citation type="submission" date="2005-11" db="EMBL/GenBank/DDBJ databases">
        <authorList>
            <consortium name="NIH - Mammalian Gene Collection (MGC) project"/>
        </authorList>
    </citation>
    <scope>NUCLEOTIDE SEQUENCE [LARGE SCALE MRNA]</scope>
    <source>
        <strain>Crossbred X Angus</strain>
        <tissue>Liver</tissue>
    </source>
</reference>
<keyword id="KW-0152">Cholesterol biosynthesis</keyword>
<keyword id="KW-0153">Cholesterol metabolism</keyword>
<keyword id="KW-0256">Endoplasmic reticulum</keyword>
<keyword id="KW-0414">Isoprene biosynthesis</keyword>
<keyword id="KW-0444">Lipid biosynthesis</keyword>
<keyword id="KW-0443">Lipid metabolism</keyword>
<keyword id="KW-0460">Magnesium</keyword>
<keyword id="KW-0472">Membrane</keyword>
<keyword id="KW-0479">Metal-binding</keyword>
<keyword id="KW-0511">Multifunctional enzyme</keyword>
<keyword id="KW-0520">NAD</keyword>
<keyword id="KW-0521">NADP</keyword>
<keyword id="KW-1185">Reference proteome</keyword>
<keyword id="KW-0752">Steroid biosynthesis</keyword>
<keyword id="KW-0753">Steroid metabolism</keyword>
<keyword id="KW-0756">Sterol biosynthesis</keyword>
<keyword id="KW-1207">Sterol metabolism</keyword>
<keyword id="KW-0808">Transferase</keyword>
<keyword id="KW-0812">Transmembrane</keyword>
<keyword id="KW-1133">Transmembrane helix</keyword>
<sequence length="417" mass="48304">MEFVKCLGHPEEFYNLLRFQMGGRRKVIPKMDQDSLSSSLKTCYKYLNQTSRSFAAVIQALDGEMRHAVCIFYLVLRALDTLEDDMTISIERKVPLLHNFHSYLYEPDWRFTESKEKDRQVLEDFPTISLEFRNLAEKYQTVIVDVCQKMGFGMAEFLDKRVTSEREWDKYCHYVAGLVGIGLSRLFPASELEDPLIGEDTERANSMGLFLQKTNIIRDYLEDQREGREFWPQETWSKYVKKLGDFAKPENIDLAVQCLNELITNTLHHIPDVITYLSRLRNQSIFNFCAIPQVMAIATLAACYNNQQVFKGVVKIRKGQAVTLMMDATNMPAVKAIIHQYMEEIYHRIPNSDPCSTKTQQIISTIRTQNLPNCQLVSRSHYSPIYLSFVMLLAALSWQYLSTLSQVTEDYVQTGEH</sequence>
<organism>
    <name type="scientific">Bos taurus</name>
    <name type="common">Bovine</name>
    <dbReference type="NCBI Taxonomy" id="9913"/>
    <lineage>
        <taxon>Eukaryota</taxon>
        <taxon>Metazoa</taxon>
        <taxon>Chordata</taxon>
        <taxon>Craniata</taxon>
        <taxon>Vertebrata</taxon>
        <taxon>Euteleostomi</taxon>
        <taxon>Mammalia</taxon>
        <taxon>Eutheria</taxon>
        <taxon>Laurasiatheria</taxon>
        <taxon>Artiodactyla</taxon>
        <taxon>Ruminantia</taxon>
        <taxon>Pecora</taxon>
        <taxon>Bovidae</taxon>
        <taxon>Bovinae</taxon>
        <taxon>Bos</taxon>
    </lineage>
</organism>
<gene>
    <name type="primary">FDFT1</name>
</gene>
<evidence type="ECO:0000250" key="1">
    <source>
        <dbReference type="UniProtKB" id="P37268"/>
    </source>
</evidence>
<evidence type="ECO:0000250" key="2">
    <source>
        <dbReference type="UniProtKB" id="Q02769"/>
    </source>
</evidence>
<evidence type="ECO:0000255" key="3"/>
<evidence type="ECO:0000305" key="4"/>
<feature type="chain" id="PRO_0000290005" description="Squalene synthase">
    <location>
        <begin position="1"/>
        <end position="417"/>
    </location>
</feature>
<feature type="transmembrane region" description="Helical" evidence="3">
    <location>
        <begin position="284"/>
        <end position="304"/>
    </location>
</feature>
<feature type="transmembrane region" description="Helical" evidence="3">
    <location>
        <begin position="384"/>
        <end position="404"/>
    </location>
</feature>
<feature type="binding site" evidence="1">
    <location>
        <position position="52"/>
    </location>
    <ligand>
        <name>NADP(+)</name>
        <dbReference type="ChEBI" id="CHEBI:58349"/>
    </ligand>
</feature>
<feature type="binding site" evidence="1">
    <location>
        <position position="77"/>
    </location>
    <ligand>
        <name>NADP(+)</name>
        <dbReference type="ChEBI" id="CHEBI:58349"/>
    </ligand>
</feature>
<feature type="binding site" evidence="1">
    <location>
        <position position="80"/>
    </location>
    <ligand>
        <name>Mg(2+)</name>
        <dbReference type="ChEBI" id="CHEBI:18420"/>
    </ligand>
</feature>
<feature type="binding site" evidence="1">
    <location>
        <position position="83"/>
    </location>
    <ligand>
        <name>Mg(2+)</name>
        <dbReference type="ChEBI" id="CHEBI:18420"/>
    </ligand>
</feature>
<feature type="binding site" evidence="1">
    <location>
        <position position="84"/>
    </location>
    <ligand>
        <name>Mg(2+)</name>
        <dbReference type="ChEBI" id="CHEBI:18420"/>
    </ligand>
</feature>
<feature type="binding site" evidence="1">
    <location>
        <position position="218"/>
    </location>
    <ligand>
        <name>NADP(+)</name>
        <dbReference type="ChEBI" id="CHEBI:58349"/>
    </ligand>
</feature>
<feature type="binding site" evidence="1">
    <location>
        <position position="315"/>
    </location>
    <ligand>
        <name>NADP(+)</name>
        <dbReference type="ChEBI" id="CHEBI:58349"/>
    </ligand>
</feature>
<feature type="binding site" evidence="1">
    <location>
        <position position="317"/>
    </location>
    <ligand>
        <name>NADP(+)</name>
        <dbReference type="ChEBI" id="CHEBI:58349"/>
    </ligand>
</feature>
<name>FDFT_BOVIN</name>
<accession>Q32KR6</accession>
<dbReference type="EC" id="2.5.1.21" evidence="1"/>
<dbReference type="EMBL" id="BC109959">
    <property type="protein sequence ID" value="AAI09960.1"/>
    <property type="molecule type" value="mRNA"/>
</dbReference>
<dbReference type="SMR" id="Q32KR6"/>
<dbReference type="FunCoup" id="Q32KR6">
    <property type="interactions" value="1199"/>
</dbReference>
<dbReference type="STRING" id="9913.ENSBTAP00000016504"/>
<dbReference type="PaxDb" id="9913-ENSBTAP00000016504"/>
<dbReference type="eggNOG" id="KOG1459">
    <property type="taxonomic scope" value="Eukaryota"/>
</dbReference>
<dbReference type="InParanoid" id="Q32KR6"/>
<dbReference type="OrthoDB" id="431150at2759"/>
<dbReference type="UniPathway" id="UPA00767">
    <property type="reaction ID" value="UER00751"/>
</dbReference>
<dbReference type="Proteomes" id="UP000009136">
    <property type="component" value="Unplaced"/>
</dbReference>
<dbReference type="GO" id="GO:0005789">
    <property type="term" value="C:endoplasmic reticulum membrane"/>
    <property type="evidence" value="ECO:0000250"/>
    <property type="project" value="UniProtKB"/>
</dbReference>
<dbReference type="GO" id="GO:0046872">
    <property type="term" value="F:metal ion binding"/>
    <property type="evidence" value="ECO:0007669"/>
    <property type="project" value="UniProtKB-KW"/>
</dbReference>
<dbReference type="GO" id="GO:0051996">
    <property type="term" value="F:squalene synthase [NAD(P)H] activity"/>
    <property type="evidence" value="ECO:0000318"/>
    <property type="project" value="GO_Central"/>
</dbReference>
<dbReference type="GO" id="GO:0006695">
    <property type="term" value="P:cholesterol biosynthetic process"/>
    <property type="evidence" value="ECO:0000318"/>
    <property type="project" value="GO_Central"/>
</dbReference>
<dbReference type="GO" id="GO:0045338">
    <property type="term" value="P:farnesyl diphosphate metabolic process"/>
    <property type="evidence" value="ECO:0000318"/>
    <property type="project" value="GO_Central"/>
</dbReference>
<dbReference type="GO" id="GO:0008299">
    <property type="term" value="P:isoprenoid biosynthetic process"/>
    <property type="evidence" value="ECO:0007669"/>
    <property type="project" value="UniProtKB-KW"/>
</dbReference>
<dbReference type="CDD" id="cd00683">
    <property type="entry name" value="Trans_IPPS_HH"/>
    <property type="match status" value="1"/>
</dbReference>
<dbReference type="FunFam" id="1.10.600.10:FF:000053">
    <property type="entry name" value="Squalene synthase"/>
    <property type="match status" value="1"/>
</dbReference>
<dbReference type="Gene3D" id="1.10.600.10">
    <property type="entry name" value="Farnesyl Diphosphate Synthase"/>
    <property type="match status" value="1"/>
</dbReference>
<dbReference type="InterPro" id="IPR008949">
    <property type="entry name" value="Isoprenoid_synthase_dom_sf"/>
</dbReference>
<dbReference type="InterPro" id="IPR002060">
    <property type="entry name" value="Squ/phyt_synthse"/>
</dbReference>
<dbReference type="InterPro" id="IPR006449">
    <property type="entry name" value="Squal_synth-like"/>
</dbReference>
<dbReference type="InterPro" id="IPR019845">
    <property type="entry name" value="Squalene/phytoene_synthase_CS"/>
</dbReference>
<dbReference type="InterPro" id="IPR044844">
    <property type="entry name" value="Trans_IPPS_euk-type"/>
</dbReference>
<dbReference type="InterPro" id="IPR033904">
    <property type="entry name" value="Trans_IPPS_HH"/>
</dbReference>
<dbReference type="NCBIfam" id="TIGR01559">
    <property type="entry name" value="squal_synth"/>
    <property type="match status" value="1"/>
</dbReference>
<dbReference type="PANTHER" id="PTHR11626">
    <property type="entry name" value="FARNESYL-DIPHOSPHATE FARNESYLTRANSFERASE"/>
    <property type="match status" value="1"/>
</dbReference>
<dbReference type="PANTHER" id="PTHR11626:SF2">
    <property type="entry name" value="SQUALENE SYNTHASE"/>
    <property type="match status" value="1"/>
</dbReference>
<dbReference type="Pfam" id="PF00494">
    <property type="entry name" value="SQS_PSY"/>
    <property type="match status" value="1"/>
</dbReference>
<dbReference type="SFLD" id="SFLDS00005">
    <property type="entry name" value="Isoprenoid_Synthase_Type_I"/>
    <property type="match status" value="1"/>
</dbReference>
<dbReference type="SFLD" id="SFLDG01018">
    <property type="entry name" value="Squalene/Phytoene_Synthase_Lik"/>
    <property type="match status" value="1"/>
</dbReference>
<dbReference type="SUPFAM" id="SSF48576">
    <property type="entry name" value="Terpenoid synthases"/>
    <property type="match status" value="1"/>
</dbReference>
<dbReference type="PROSITE" id="PS01044">
    <property type="entry name" value="SQUALEN_PHYTOEN_SYN_1"/>
    <property type="match status" value="1"/>
</dbReference>
<dbReference type="PROSITE" id="PS01045">
    <property type="entry name" value="SQUALEN_PHYTOEN_SYN_2"/>
    <property type="match status" value="1"/>
</dbReference>
<protein>
    <recommendedName>
        <fullName>Squalene synthase</fullName>
        <shortName>SQS</shortName>
        <shortName>SS</shortName>
        <ecNumber evidence="1">2.5.1.21</ecNumber>
    </recommendedName>
    <alternativeName>
        <fullName>FPP:FPP farnesyltransferase</fullName>
    </alternativeName>
    <alternativeName>
        <fullName>Farnesyl-diphosphate farnesyltransferase</fullName>
    </alternativeName>
</protein>
<comment type="function">
    <text evidence="1">Catalyzes the condensation of 2 farnesyl pyrophosphate (FPP) moieties to form squalene. Proceeds in two distinct steps. In the first half-reaction, two molecules of FPP react to form the stable presqualene diphosphate intermediate (PSQPP), with concomitant release of a proton and a molecule of inorganic diphosphate. In the second half-reaction, PSQPP undergoes heterolysis, isomerization, and reduction with NADPH or NADH to form squalene. It is the first committed enzyme of the sterol biosynthesis pathway.</text>
</comment>
<comment type="catalytic activity">
    <reaction evidence="1">
        <text>2 (2E,6E)-farnesyl diphosphate + NADPH + H(+) = squalene + 2 diphosphate + NADP(+)</text>
        <dbReference type="Rhea" id="RHEA:32295"/>
        <dbReference type="ChEBI" id="CHEBI:15378"/>
        <dbReference type="ChEBI" id="CHEBI:15440"/>
        <dbReference type="ChEBI" id="CHEBI:33019"/>
        <dbReference type="ChEBI" id="CHEBI:57783"/>
        <dbReference type="ChEBI" id="CHEBI:58349"/>
        <dbReference type="ChEBI" id="CHEBI:175763"/>
        <dbReference type="EC" id="2.5.1.21"/>
    </reaction>
    <physiologicalReaction direction="left-to-right" evidence="1">
        <dbReference type="Rhea" id="RHEA:32296"/>
    </physiologicalReaction>
</comment>
<comment type="catalytic activity">
    <reaction evidence="1">
        <text>2 (2E,6E)-farnesyl diphosphate + NADH + H(+) = squalene + 2 diphosphate + NAD(+)</text>
        <dbReference type="Rhea" id="RHEA:32299"/>
        <dbReference type="ChEBI" id="CHEBI:15378"/>
        <dbReference type="ChEBI" id="CHEBI:15440"/>
        <dbReference type="ChEBI" id="CHEBI:33019"/>
        <dbReference type="ChEBI" id="CHEBI:57540"/>
        <dbReference type="ChEBI" id="CHEBI:57945"/>
        <dbReference type="ChEBI" id="CHEBI:175763"/>
        <dbReference type="EC" id="2.5.1.21"/>
    </reaction>
    <physiologicalReaction direction="left-to-right" evidence="1">
        <dbReference type="Rhea" id="RHEA:32300"/>
    </physiologicalReaction>
</comment>
<comment type="catalytic activity">
    <reaction evidence="1">
        <text>presqualene diphosphate + NADH + H(+) = squalene + diphosphate + NAD(+)</text>
        <dbReference type="Rhea" id="RHEA:22228"/>
        <dbReference type="ChEBI" id="CHEBI:15378"/>
        <dbReference type="ChEBI" id="CHEBI:15440"/>
        <dbReference type="ChEBI" id="CHEBI:33019"/>
        <dbReference type="ChEBI" id="CHEBI:57310"/>
        <dbReference type="ChEBI" id="CHEBI:57540"/>
        <dbReference type="ChEBI" id="CHEBI:57945"/>
    </reaction>
    <physiologicalReaction direction="left-to-right" evidence="1">
        <dbReference type="Rhea" id="RHEA:22229"/>
    </physiologicalReaction>
</comment>
<comment type="catalytic activity">
    <reaction evidence="1">
        <text>presqualene diphosphate + NADPH + H(+) = squalene + diphosphate + NADP(+)</text>
        <dbReference type="Rhea" id="RHEA:22232"/>
        <dbReference type="ChEBI" id="CHEBI:15378"/>
        <dbReference type="ChEBI" id="CHEBI:15440"/>
        <dbReference type="ChEBI" id="CHEBI:33019"/>
        <dbReference type="ChEBI" id="CHEBI:57310"/>
        <dbReference type="ChEBI" id="CHEBI:57783"/>
        <dbReference type="ChEBI" id="CHEBI:58349"/>
    </reaction>
    <physiologicalReaction direction="left-to-right" evidence="1">
        <dbReference type="Rhea" id="RHEA:22233"/>
    </physiologicalReaction>
</comment>
<comment type="catalytic activity">
    <reaction evidence="1">
        <text>2 (2E,6E)-farnesyl diphosphate = presqualene diphosphate + diphosphate</text>
        <dbReference type="Rhea" id="RHEA:22672"/>
        <dbReference type="ChEBI" id="CHEBI:33019"/>
        <dbReference type="ChEBI" id="CHEBI:57310"/>
        <dbReference type="ChEBI" id="CHEBI:175763"/>
    </reaction>
    <physiologicalReaction direction="left-to-right" evidence="1">
        <dbReference type="Rhea" id="RHEA:22673"/>
    </physiologicalReaction>
</comment>
<comment type="cofactor">
    <cofactor evidence="1">
        <name>Mg(2+)</name>
        <dbReference type="ChEBI" id="CHEBI:18420"/>
    </cofactor>
</comment>
<comment type="pathway">
    <text evidence="4">Terpene metabolism; lanosterol biosynthesis; lanosterol from farnesyl diphosphate: step 1/3.</text>
</comment>
<comment type="subcellular location">
    <subcellularLocation>
        <location evidence="2">Endoplasmic reticulum membrane</location>
        <topology evidence="3">Multi-pass membrane protein</topology>
    </subcellularLocation>
</comment>
<comment type="similarity">
    <text evidence="4">Belongs to the phytoene/squalene synthase family.</text>
</comment>
<proteinExistence type="evidence at transcript level"/>